<evidence type="ECO:0000255" key="1">
    <source>
        <dbReference type="HAMAP-Rule" id="MF_00248"/>
    </source>
</evidence>
<comment type="function">
    <text evidence="1">Protease subunit of a proteasome-like degradation complex believed to be a general protein degrading machinery.</text>
</comment>
<comment type="catalytic activity">
    <reaction evidence="1">
        <text>ATP-dependent cleavage of peptide bonds with broad specificity.</text>
        <dbReference type="EC" id="3.4.25.2"/>
    </reaction>
</comment>
<comment type="activity regulation">
    <text evidence="1">Allosterically activated by HslU binding.</text>
</comment>
<comment type="subunit">
    <text evidence="1">A double ring-shaped homohexamer of HslV is capped on each side by a ring-shaped HslU homohexamer. The assembly of the HslU/HslV complex is dependent on binding of ATP.</text>
</comment>
<comment type="subcellular location">
    <subcellularLocation>
        <location evidence="1">Cytoplasm</location>
    </subcellularLocation>
</comment>
<comment type="similarity">
    <text evidence="1">Belongs to the peptidase T1B family. HslV subfamily.</text>
</comment>
<dbReference type="EC" id="3.4.25.2" evidence="1"/>
<dbReference type="EMBL" id="AM406670">
    <property type="protein sequence ID" value="CAL93040.1"/>
    <property type="molecule type" value="Genomic_DNA"/>
</dbReference>
<dbReference type="RefSeq" id="WP_011764158.1">
    <property type="nucleotide sequence ID" value="NC_008702.1"/>
</dbReference>
<dbReference type="SMR" id="A1K2I5"/>
<dbReference type="STRING" id="62928.azo0423"/>
<dbReference type="MEROPS" id="T01.006"/>
<dbReference type="KEGG" id="aoa:dqs_0434"/>
<dbReference type="KEGG" id="azo:azo0423"/>
<dbReference type="eggNOG" id="COG5405">
    <property type="taxonomic scope" value="Bacteria"/>
</dbReference>
<dbReference type="HOGENOM" id="CLU_093872_1_0_4"/>
<dbReference type="OrthoDB" id="9804884at2"/>
<dbReference type="Proteomes" id="UP000002588">
    <property type="component" value="Chromosome"/>
</dbReference>
<dbReference type="GO" id="GO:0009376">
    <property type="term" value="C:HslUV protease complex"/>
    <property type="evidence" value="ECO:0007669"/>
    <property type="project" value="UniProtKB-UniRule"/>
</dbReference>
<dbReference type="GO" id="GO:0005839">
    <property type="term" value="C:proteasome core complex"/>
    <property type="evidence" value="ECO:0007669"/>
    <property type="project" value="InterPro"/>
</dbReference>
<dbReference type="GO" id="GO:0046872">
    <property type="term" value="F:metal ion binding"/>
    <property type="evidence" value="ECO:0007669"/>
    <property type="project" value="UniProtKB-KW"/>
</dbReference>
<dbReference type="GO" id="GO:0004298">
    <property type="term" value="F:threonine-type endopeptidase activity"/>
    <property type="evidence" value="ECO:0007669"/>
    <property type="project" value="UniProtKB-KW"/>
</dbReference>
<dbReference type="GO" id="GO:0051603">
    <property type="term" value="P:proteolysis involved in protein catabolic process"/>
    <property type="evidence" value="ECO:0007669"/>
    <property type="project" value="InterPro"/>
</dbReference>
<dbReference type="CDD" id="cd01913">
    <property type="entry name" value="protease_HslV"/>
    <property type="match status" value="1"/>
</dbReference>
<dbReference type="FunFam" id="3.60.20.10:FF:000002">
    <property type="entry name" value="ATP-dependent protease subunit HslV"/>
    <property type="match status" value="1"/>
</dbReference>
<dbReference type="Gene3D" id="3.60.20.10">
    <property type="entry name" value="Glutamine Phosphoribosylpyrophosphate, subunit 1, domain 1"/>
    <property type="match status" value="1"/>
</dbReference>
<dbReference type="HAMAP" id="MF_00248">
    <property type="entry name" value="HslV"/>
    <property type="match status" value="1"/>
</dbReference>
<dbReference type="InterPro" id="IPR022281">
    <property type="entry name" value="ATP-dep_Prtase_HsIV_su"/>
</dbReference>
<dbReference type="InterPro" id="IPR029055">
    <property type="entry name" value="Ntn_hydrolases_N"/>
</dbReference>
<dbReference type="InterPro" id="IPR001353">
    <property type="entry name" value="Proteasome_sua/b"/>
</dbReference>
<dbReference type="InterPro" id="IPR023333">
    <property type="entry name" value="Proteasome_suB-type"/>
</dbReference>
<dbReference type="NCBIfam" id="TIGR03692">
    <property type="entry name" value="ATP_dep_HslV"/>
    <property type="match status" value="1"/>
</dbReference>
<dbReference type="NCBIfam" id="NF003964">
    <property type="entry name" value="PRK05456.1"/>
    <property type="match status" value="1"/>
</dbReference>
<dbReference type="PANTHER" id="PTHR32194:SF0">
    <property type="entry name" value="ATP-DEPENDENT PROTEASE SUBUNIT HSLV"/>
    <property type="match status" value="1"/>
</dbReference>
<dbReference type="PANTHER" id="PTHR32194">
    <property type="entry name" value="METALLOPROTEASE TLDD"/>
    <property type="match status" value="1"/>
</dbReference>
<dbReference type="Pfam" id="PF00227">
    <property type="entry name" value="Proteasome"/>
    <property type="match status" value="1"/>
</dbReference>
<dbReference type="PIRSF" id="PIRSF039093">
    <property type="entry name" value="HslV"/>
    <property type="match status" value="1"/>
</dbReference>
<dbReference type="SUPFAM" id="SSF56235">
    <property type="entry name" value="N-terminal nucleophile aminohydrolases (Ntn hydrolases)"/>
    <property type="match status" value="1"/>
</dbReference>
<dbReference type="PROSITE" id="PS51476">
    <property type="entry name" value="PROTEASOME_BETA_2"/>
    <property type="match status" value="1"/>
</dbReference>
<protein>
    <recommendedName>
        <fullName evidence="1">ATP-dependent protease subunit HslV</fullName>
        <ecNumber evidence="1">3.4.25.2</ecNumber>
    </recommendedName>
</protein>
<keyword id="KW-0021">Allosteric enzyme</keyword>
<keyword id="KW-0963">Cytoplasm</keyword>
<keyword id="KW-0378">Hydrolase</keyword>
<keyword id="KW-0479">Metal-binding</keyword>
<keyword id="KW-0645">Protease</keyword>
<keyword id="KW-1185">Reference proteome</keyword>
<keyword id="KW-0915">Sodium</keyword>
<keyword id="KW-0888">Threonine protease</keyword>
<proteinExistence type="inferred from homology"/>
<organism>
    <name type="scientific">Azoarcus sp. (strain BH72)</name>
    <dbReference type="NCBI Taxonomy" id="418699"/>
    <lineage>
        <taxon>Bacteria</taxon>
        <taxon>Pseudomonadati</taxon>
        <taxon>Pseudomonadota</taxon>
        <taxon>Betaproteobacteria</taxon>
        <taxon>Rhodocyclales</taxon>
        <taxon>Zoogloeaceae</taxon>
        <taxon>Azoarcus</taxon>
    </lineage>
</organism>
<sequence>MEQYHGTTILSVRRGNSVALGGDGQVTLGNIVVKASARKVRTLYQGQILAGFAGGTADAFTLFERFEAKLDKHQGNLLRSAVELAKDWRTDRMLRRLEAMLAVADREHSLIITGNGDVLEPEQGIVAIGSGGAYAQSAARALIENTELSPRDVIAKSLAIAGDLCIYTNQCHTIEVLD</sequence>
<feature type="chain" id="PRO_1000012575" description="ATP-dependent protease subunit HslV">
    <location>
        <begin position="1"/>
        <end position="178"/>
    </location>
</feature>
<feature type="active site" evidence="1">
    <location>
        <position position="7"/>
    </location>
</feature>
<feature type="binding site" evidence="1">
    <location>
        <position position="162"/>
    </location>
    <ligand>
        <name>Na(+)</name>
        <dbReference type="ChEBI" id="CHEBI:29101"/>
    </ligand>
</feature>
<feature type="binding site" evidence="1">
    <location>
        <position position="165"/>
    </location>
    <ligand>
        <name>Na(+)</name>
        <dbReference type="ChEBI" id="CHEBI:29101"/>
    </ligand>
</feature>
<feature type="binding site" evidence="1">
    <location>
        <position position="168"/>
    </location>
    <ligand>
        <name>Na(+)</name>
        <dbReference type="ChEBI" id="CHEBI:29101"/>
    </ligand>
</feature>
<name>HSLV_AZOSB</name>
<reference key="1">
    <citation type="journal article" date="2006" name="Nat. Biotechnol.">
        <title>Complete genome of the mutualistic, N2-fixing grass endophyte Azoarcus sp. strain BH72.</title>
        <authorList>
            <person name="Krause A."/>
            <person name="Ramakumar A."/>
            <person name="Bartels D."/>
            <person name="Battistoni F."/>
            <person name="Bekel T."/>
            <person name="Boch J."/>
            <person name="Boehm M."/>
            <person name="Friedrich F."/>
            <person name="Hurek T."/>
            <person name="Krause L."/>
            <person name="Linke B."/>
            <person name="McHardy A.C."/>
            <person name="Sarkar A."/>
            <person name="Schneiker S."/>
            <person name="Syed A.A."/>
            <person name="Thauer R."/>
            <person name="Vorhoelter F.-J."/>
            <person name="Weidner S."/>
            <person name="Puehler A."/>
            <person name="Reinhold-Hurek B."/>
            <person name="Kaiser O."/>
            <person name="Goesmann A."/>
        </authorList>
    </citation>
    <scope>NUCLEOTIDE SEQUENCE [LARGE SCALE GENOMIC DNA]</scope>
    <source>
        <strain>BH72</strain>
    </source>
</reference>
<accession>A1K2I5</accession>
<gene>
    <name evidence="1" type="primary">hslV</name>
    <name type="ordered locus">azo0423</name>
</gene>